<gene>
    <name evidence="1" type="primary">rpsR</name>
    <name type="ordered locus">str1752</name>
</gene>
<feature type="chain" id="PRO_1000003635" description="Small ribosomal subunit protein bS18">
    <location>
        <begin position="1"/>
        <end position="79"/>
    </location>
</feature>
<accession>Q5LY50</accession>
<sequence>MAQQRRGGFKRRKKFDYIAANKIEYVDYKDTELLSRFVSERGKILPRRVTGTSAKNQRKVTTAIKRARVMALMPYVNED</sequence>
<keyword id="KW-0687">Ribonucleoprotein</keyword>
<keyword id="KW-0689">Ribosomal protein</keyword>
<keyword id="KW-0694">RNA-binding</keyword>
<keyword id="KW-0699">rRNA-binding</keyword>
<reference key="1">
    <citation type="journal article" date="2004" name="Nat. Biotechnol.">
        <title>Complete sequence and comparative genome analysis of the dairy bacterium Streptococcus thermophilus.</title>
        <authorList>
            <person name="Bolotin A."/>
            <person name="Quinquis B."/>
            <person name="Renault P."/>
            <person name="Sorokin A."/>
            <person name="Ehrlich S.D."/>
            <person name="Kulakauskas S."/>
            <person name="Lapidus A."/>
            <person name="Goltsman E."/>
            <person name="Mazur M."/>
            <person name="Pusch G.D."/>
            <person name="Fonstein M."/>
            <person name="Overbeek R."/>
            <person name="Kyprides N."/>
            <person name="Purnelle B."/>
            <person name="Prozzi D."/>
            <person name="Ngui K."/>
            <person name="Masuy D."/>
            <person name="Hancy F."/>
            <person name="Burteau S."/>
            <person name="Boutry M."/>
            <person name="Delcour J."/>
            <person name="Goffeau A."/>
            <person name="Hols P."/>
        </authorList>
    </citation>
    <scope>NUCLEOTIDE SEQUENCE [LARGE SCALE GENOMIC DNA]</scope>
    <source>
        <strain>CNRZ 1066</strain>
    </source>
</reference>
<dbReference type="EMBL" id="CP000024">
    <property type="protein sequence ID" value="AAV63270.1"/>
    <property type="molecule type" value="Genomic_DNA"/>
</dbReference>
<dbReference type="RefSeq" id="WP_002945024.1">
    <property type="nucleotide sequence ID" value="NC_006449.1"/>
</dbReference>
<dbReference type="SMR" id="Q5LY50"/>
<dbReference type="GeneID" id="66899488"/>
<dbReference type="KEGG" id="stc:str1752"/>
<dbReference type="HOGENOM" id="CLU_148710_2_2_9"/>
<dbReference type="GO" id="GO:0022627">
    <property type="term" value="C:cytosolic small ribosomal subunit"/>
    <property type="evidence" value="ECO:0007669"/>
    <property type="project" value="TreeGrafter"/>
</dbReference>
<dbReference type="GO" id="GO:0070181">
    <property type="term" value="F:small ribosomal subunit rRNA binding"/>
    <property type="evidence" value="ECO:0007669"/>
    <property type="project" value="TreeGrafter"/>
</dbReference>
<dbReference type="GO" id="GO:0003735">
    <property type="term" value="F:structural constituent of ribosome"/>
    <property type="evidence" value="ECO:0007669"/>
    <property type="project" value="InterPro"/>
</dbReference>
<dbReference type="GO" id="GO:0006412">
    <property type="term" value="P:translation"/>
    <property type="evidence" value="ECO:0007669"/>
    <property type="project" value="UniProtKB-UniRule"/>
</dbReference>
<dbReference type="FunFam" id="4.10.640.10:FF:000003">
    <property type="entry name" value="30S ribosomal protein S18"/>
    <property type="match status" value="1"/>
</dbReference>
<dbReference type="Gene3D" id="4.10.640.10">
    <property type="entry name" value="Ribosomal protein S18"/>
    <property type="match status" value="1"/>
</dbReference>
<dbReference type="HAMAP" id="MF_00270">
    <property type="entry name" value="Ribosomal_bS18"/>
    <property type="match status" value="1"/>
</dbReference>
<dbReference type="InterPro" id="IPR001648">
    <property type="entry name" value="Ribosomal_bS18"/>
</dbReference>
<dbReference type="InterPro" id="IPR018275">
    <property type="entry name" value="Ribosomal_bS18_CS"/>
</dbReference>
<dbReference type="InterPro" id="IPR036870">
    <property type="entry name" value="Ribosomal_bS18_sf"/>
</dbReference>
<dbReference type="NCBIfam" id="TIGR00165">
    <property type="entry name" value="S18"/>
    <property type="match status" value="1"/>
</dbReference>
<dbReference type="PANTHER" id="PTHR13479">
    <property type="entry name" value="30S RIBOSOMAL PROTEIN S18"/>
    <property type="match status" value="1"/>
</dbReference>
<dbReference type="PANTHER" id="PTHR13479:SF40">
    <property type="entry name" value="SMALL RIBOSOMAL SUBUNIT PROTEIN BS18M"/>
    <property type="match status" value="1"/>
</dbReference>
<dbReference type="Pfam" id="PF01084">
    <property type="entry name" value="Ribosomal_S18"/>
    <property type="match status" value="1"/>
</dbReference>
<dbReference type="PRINTS" id="PR00974">
    <property type="entry name" value="RIBOSOMALS18"/>
</dbReference>
<dbReference type="SUPFAM" id="SSF46911">
    <property type="entry name" value="Ribosomal protein S18"/>
    <property type="match status" value="1"/>
</dbReference>
<dbReference type="PROSITE" id="PS00057">
    <property type="entry name" value="RIBOSOMAL_S18"/>
    <property type="match status" value="1"/>
</dbReference>
<organism>
    <name type="scientific">Streptococcus thermophilus (strain CNRZ 1066)</name>
    <dbReference type="NCBI Taxonomy" id="299768"/>
    <lineage>
        <taxon>Bacteria</taxon>
        <taxon>Bacillati</taxon>
        <taxon>Bacillota</taxon>
        <taxon>Bacilli</taxon>
        <taxon>Lactobacillales</taxon>
        <taxon>Streptococcaceae</taxon>
        <taxon>Streptococcus</taxon>
    </lineage>
</organism>
<protein>
    <recommendedName>
        <fullName evidence="1">Small ribosomal subunit protein bS18</fullName>
    </recommendedName>
    <alternativeName>
        <fullName evidence="2">30S ribosomal protein S18</fullName>
    </alternativeName>
</protein>
<evidence type="ECO:0000255" key="1">
    <source>
        <dbReference type="HAMAP-Rule" id="MF_00270"/>
    </source>
</evidence>
<evidence type="ECO:0000305" key="2"/>
<comment type="function">
    <text evidence="1">Binds as a heterodimer with protein bS6 to the central domain of the 16S rRNA, where it helps stabilize the platform of the 30S subunit.</text>
</comment>
<comment type="subunit">
    <text evidence="1">Part of the 30S ribosomal subunit. Forms a tight heterodimer with protein bS6.</text>
</comment>
<comment type="similarity">
    <text evidence="1">Belongs to the bacterial ribosomal protein bS18 family.</text>
</comment>
<proteinExistence type="inferred from homology"/>
<name>RS18_STRT1</name>